<reference evidence="8" key="1">
    <citation type="journal article" date="2005" name="Science">
        <title>The transcriptional landscape of the mammalian genome.</title>
        <authorList>
            <person name="Carninci P."/>
            <person name="Kasukawa T."/>
            <person name="Katayama S."/>
            <person name="Gough J."/>
            <person name="Frith M.C."/>
            <person name="Maeda N."/>
            <person name="Oyama R."/>
            <person name="Ravasi T."/>
            <person name="Lenhard B."/>
            <person name="Wells C."/>
            <person name="Kodzius R."/>
            <person name="Shimokawa K."/>
            <person name="Bajic V.B."/>
            <person name="Brenner S.E."/>
            <person name="Batalov S."/>
            <person name="Forrest A.R."/>
            <person name="Zavolan M."/>
            <person name="Davis M.J."/>
            <person name="Wilming L.G."/>
            <person name="Aidinis V."/>
            <person name="Allen J.E."/>
            <person name="Ambesi-Impiombato A."/>
            <person name="Apweiler R."/>
            <person name="Aturaliya R.N."/>
            <person name="Bailey T.L."/>
            <person name="Bansal M."/>
            <person name="Baxter L."/>
            <person name="Beisel K.W."/>
            <person name="Bersano T."/>
            <person name="Bono H."/>
            <person name="Chalk A.M."/>
            <person name="Chiu K.P."/>
            <person name="Choudhary V."/>
            <person name="Christoffels A."/>
            <person name="Clutterbuck D.R."/>
            <person name="Crowe M.L."/>
            <person name="Dalla E."/>
            <person name="Dalrymple B.P."/>
            <person name="de Bono B."/>
            <person name="Della Gatta G."/>
            <person name="di Bernardo D."/>
            <person name="Down T."/>
            <person name="Engstrom P."/>
            <person name="Fagiolini M."/>
            <person name="Faulkner G."/>
            <person name="Fletcher C.F."/>
            <person name="Fukushima T."/>
            <person name="Furuno M."/>
            <person name="Futaki S."/>
            <person name="Gariboldi M."/>
            <person name="Georgii-Hemming P."/>
            <person name="Gingeras T.R."/>
            <person name="Gojobori T."/>
            <person name="Green R.E."/>
            <person name="Gustincich S."/>
            <person name="Harbers M."/>
            <person name="Hayashi Y."/>
            <person name="Hensch T.K."/>
            <person name="Hirokawa N."/>
            <person name="Hill D."/>
            <person name="Huminiecki L."/>
            <person name="Iacono M."/>
            <person name="Ikeo K."/>
            <person name="Iwama A."/>
            <person name="Ishikawa T."/>
            <person name="Jakt M."/>
            <person name="Kanapin A."/>
            <person name="Katoh M."/>
            <person name="Kawasawa Y."/>
            <person name="Kelso J."/>
            <person name="Kitamura H."/>
            <person name="Kitano H."/>
            <person name="Kollias G."/>
            <person name="Krishnan S.P."/>
            <person name="Kruger A."/>
            <person name="Kummerfeld S.K."/>
            <person name="Kurochkin I.V."/>
            <person name="Lareau L.F."/>
            <person name="Lazarevic D."/>
            <person name="Lipovich L."/>
            <person name="Liu J."/>
            <person name="Liuni S."/>
            <person name="McWilliam S."/>
            <person name="Madan Babu M."/>
            <person name="Madera M."/>
            <person name="Marchionni L."/>
            <person name="Matsuda H."/>
            <person name="Matsuzawa S."/>
            <person name="Miki H."/>
            <person name="Mignone F."/>
            <person name="Miyake S."/>
            <person name="Morris K."/>
            <person name="Mottagui-Tabar S."/>
            <person name="Mulder N."/>
            <person name="Nakano N."/>
            <person name="Nakauchi H."/>
            <person name="Ng P."/>
            <person name="Nilsson R."/>
            <person name="Nishiguchi S."/>
            <person name="Nishikawa S."/>
            <person name="Nori F."/>
            <person name="Ohara O."/>
            <person name="Okazaki Y."/>
            <person name="Orlando V."/>
            <person name="Pang K.C."/>
            <person name="Pavan W.J."/>
            <person name="Pavesi G."/>
            <person name="Pesole G."/>
            <person name="Petrovsky N."/>
            <person name="Piazza S."/>
            <person name="Reed J."/>
            <person name="Reid J.F."/>
            <person name="Ring B.Z."/>
            <person name="Ringwald M."/>
            <person name="Rost B."/>
            <person name="Ruan Y."/>
            <person name="Salzberg S.L."/>
            <person name="Sandelin A."/>
            <person name="Schneider C."/>
            <person name="Schoenbach C."/>
            <person name="Sekiguchi K."/>
            <person name="Semple C.A."/>
            <person name="Seno S."/>
            <person name="Sessa L."/>
            <person name="Sheng Y."/>
            <person name="Shibata Y."/>
            <person name="Shimada H."/>
            <person name="Shimada K."/>
            <person name="Silva D."/>
            <person name="Sinclair B."/>
            <person name="Sperling S."/>
            <person name="Stupka E."/>
            <person name="Sugiura K."/>
            <person name="Sultana R."/>
            <person name="Takenaka Y."/>
            <person name="Taki K."/>
            <person name="Tammoja K."/>
            <person name="Tan S.L."/>
            <person name="Tang S."/>
            <person name="Taylor M.S."/>
            <person name="Tegner J."/>
            <person name="Teichmann S.A."/>
            <person name="Ueda H.R."/>
            <person name="van Nimwegen E."/>
            <person name="Verardo R."/>
            <person name="Wei C.L."/>
            <person name="Yagi K."/>
            <person name="Yamanishi H."/>
            <person name="Zabarovsky E."/>
            <person name="Zhu S."/>
            <person name="Zimmer A."/>
            <person name="Hide W."/>
            <person name="Bult C."/>
            <person name="Grimmond S.M."/>
            <person name="Teasdale R.D."/>
            <person name="Liu E.T."/>
            <person name="Brusic V."/>
            <person name="Quackenbush J."/>
            <person name="Wahlestedt C."/>
            <person name="Mattick J.S."/>
            <person name="Hume D.A."/>
            <person name="Kai C."/>
            <person name="Sasaki D."/>
            <person name="Tomaru Y."/>
            <person name="Fukuda S."/>
            <person name="Kanamori-Katayama M."/>
            <person name="Suzuki M."/>
            <person name="Aoki J."/>
            <person name="Arakawa T."/>
            <person name="Iida J."/>
            <person name="Imamura K."/>
            <person name="Itoh M."/>
            <person name="Kato T."/>
            <person name="Kawaji H."/>
            <person name="Kawagashira N."/>
            <person name="Kawashima T."/>
            <person name="Kojima M."/>
            <person name="Kondo S."/>
            <person name="Konno H."/>
            <person name="Nakano K."/>
            <person name="Ninomiya N."/>
            <person name="Nishio T."/>
            <person name="Okada M."/>
            <person name="Plessy C."/>
            <person name="Shibata K."/>
            <person name="Shiraki T."/>
            <person name="Suzuki S."/>
            <person name="Tagami M."/>
            <person name="Waki K."/>
            <person name="Watahiki A."/>
            <person name="Okamura-Oho Y."/>
            <person name="Suzuki H."/>
            <person name="Kawai J."/>
            <person name="Hayashizaki Y."/>
        </authorList>
    </citation>
    <scope>NUCLEOTIDE SEQUENCE [LARGE SCALE MRNA]</scope>
    <source>
        <strain evidence="7">C57BL/6J</strain>
        <tissue evidence="7">Liver</tissue>
        <tissue evidence="8">Lung</tissue>
    </source>
</reference>
<reference key="2">
    <citation type="journal article" date="2009" name="PLoS Biol.">
        <title>Lineage-specific biology revealed by a finished genome assembly of the mouse.</title>
        <authorList>
            <person name="Church D.M."/>
            <person name="Goodstadt L."/>
            <person name="Hillier L.W."/>
            <person name="Zody M.C."/>
            <person name="Goldstein S."/>
            <person name="She X."/>
            <person name="Bult C.J."/>
            <person name="Agarwala R."/>
            <person name="Cherry J.L."/>
            <person name="DiCuccio M."/>
            <person name="Hlavina W."/>
            <person name="Kapustin Y."/>
            <person name="Meric P."/>
            <person name="Maglott D."/>
            <person name="Birtle Z."/>
            <person name="Marques A.C."/>
            <person name="Graves T."/>
            <person name="Zhou S."/>
            <person name="Teague B."/>
            <person name="Potamousis K."/>
            <person name="Churas C."/>
            <person name="Place M."/>
            <person name="Herschleb J."/>
            <person name="Runnheim R."/>
            <person name="Forrest D."/>
            <person name="Amos-Landgraf J."/>
            <person name="Schwartz D.C."/>
            <person name="Cheng Z."/>
            <person name="Lindblad-Toh K."/>
            <person name="Eichler E.E."/>
            <person name="Ponting C.P."/>
        </authorList>
    </citation>
    <scope>NUCLEOTIDE SEQUENCE [LARGE SCALE GENOMIC DNA]</scope>
    <source>
        <strain>C57BL/6J</strain>
    </source>
</reference>
<reference evidence="6" key="3">
    <citation type="journal article" date="2004" name="Genome Res.">
        <title>The status, quality, and expansion of the NIH full-length cDNA project: the Mammalian Gene Collection (MGC).</title>
        <authorList>
            <consortium name="The MGC Project Team"/>
        </authorList>
    </citation>
    <scope>NUCLEOTIDE SEQUENCE [LARGE SCALE MRNA]</scope>
    <source>
        <strain evidence="6">C57BL/6J</strain>
        <tissue evidence="5">Eye</tissue>
        <tissue evidence="6">Olfactory epithelium</tissue>
    </source>
</reference>
<reference key="4">
    <citation type="journal article" date="2010" name="Cell">
        <title>A tissue-specific atlas of mouse protein phosphorylation and expression.</title>
        <authorList>
            <person name="Huttlin E.L."/>
            <person name="Jedrychowski M.P."/>
            <person name="Elias J.E."/>
            <person name="Goswami T."/>
            <person name="Rad R."/>
            <person name="Beausoleil S.A."/>
            <person name="Villen J."/>
            <person name="Haas W."/>
            <person name="Sowa M.E."/>
            <person name="Gygi S.P."/>
        </authorList>
    </citation>
    <scope>IDENTIFICATION BY MASS SPECTROMETRY [LARGE SCALE ANALYSIS]</scope>
    <source>
        <tissue>Brown adipose tissue</tissue>
        <tissue>Kidney</tissue>
        <tissue>Lung</tissue>
        <tissue>Spleen</tissue>
    </source>
</reference>
<reference key="5">
    <citation type="journal article" date="2013" name="Nature">
        <title>Regulation of mTORC1 by the Rag GTPases is necessary for neonatal autophagy and survival.</title>
        <authorList>
            <person name="Efeyan A."/>
            <person name="Zoncu R."/>
            <person name="Chang S."/>
            <person name="Gumper I."/>
            <person name="Snitkin H."/>
            <person name="Wolfson R.L."/>
            <person name="Kirak O."/>
            <person name="Sabatini D.D."/>
            <person name="Sabatini D.M."/>
        </authorList>
    </citation>
    <scope>FUNCTION</scope>
    <scope>MUTAGENESIS OF GLN-66</scope>
</reference>
<reference key="6">
    <citation type="journal article" date="2014" name="Cell">
        <title>Sestrins function as guanine nucleotide dissociation inhibitors for Rag GTPases to control mTORC1 signaling.</title>
        <authorList>
            <person name="Peng M."/>
            <person name="Yin N."/>
            <person name="Li M.O."/>
        </authorList>
    </citation>
    <scope>INTERACTION WITH SESN1; SESN2 AND SESN3</scope>
</reference>
<reference key="7">
    <citation type="journal article" date="2018" name="Genes Cells">
        <title>TMEM55B contributes to lysosomal homeostasis and amino acid-induced mTORC1 activation.</title>
        <authorList>
            <person name="Hashimoto Y."/>
            <person name="Shirane M."/>
            <person name="Nakayama K.I."/>
        </authorList>
    </citation>
    <scope>INTERACTION WITH PIP4P1</scope>
</reference>
<keyword id="KW-0053">Apoptosis</keyword>
<keyword id="KW-0963">Cytoplasm</keyword>
<keyword id="KW-0342">GTP-binding</keyword>
<keyword id="KW-0378">Hydrolase</keyword>
<keyword id="KW-1017">Isopeptide bond</keyword>
<keyword id="KW-0458">Lysosome</keyword>
<keyword id="KW-0472">Membrane</keyword>
<keyword id="KW-0547">Nucleotide-binding</keyword>
<keyword id="KW-0539">Nucleus</keyword>
<keyword id="KW-0597">Phosphoprotein</keyword>
<keyword id="KW-1185">Reference proteome</keyword>
<keyword id="KW-0832">Ubl conjugation</keyword>
<accession>Q80X95</accession>
<accession>B1AXR0</accession>
<accession>Q8C1S2</accession>
<accession>Q8CFU3</accession>
<gene>
    <name evidence="9" type="primary">Rraga</name>
</gene>
<dbReference type="EC" id="3.6.5.-" evidence="1"/>
<dbReference type="EMBL" id="AK004955">
    <property type="protein sequence ID" value="BAC25103.1"/>
    <property type="status" value="ALT_FRAME"/>
    <property type="molecule type" value="mRNA"/>
</dbReference>
<dbReference type="EMBL" id="AK144591">
    <property type="protein sequence ID" value="BAE25953.1"/>
    <property type="molecule type" value="mRNA"/>
</dbReference>
<dbReference type="EMBL" id="AL824707">
    <property type="status" value="NOT_ANNOTATED_CDS"/>
    <property type="molecule type" value="Genomic_DNA"/>
</dbReference>
<dbReference type="EMBL" id="BC037615">
    <property type="protein sequence ID" value="AAH37615.1"/>
    <property type="status" value="ALT_INIT"/>
    <property type="molecule type" value="mRNA"/>
</dbReference>
<dbReference type="EMBL" id="BC048245">
    <property type="protein sequence ID" value="AAH48245.1"/>
    <property type="molecule type" value="mRNA"/>
</dbReference>
<dbReference type="CCDS" id="CCDS18306.1"/>
<dbReference type="RefSeq" id="NP_848463.1">
    <property type="nucleotide sequence ID" value="NM_178376.3"/>
</dbReference>
<dbReference type="SMR" id="Q80X95"/>
<dbReference type="BioGRID" id="212856">
    <property type="interactions" value="13"/>
</dbReference>
<dbReference type="FunCoup" id="Q80X95">
    <property type="interactions" value="3029"/>
</dbReference>
<dbReference type="IntAct" id="Q80X95">
    <property type="interactions" value="4"/>
</dbReference>
<dbReference type="STRING" id="10090.ENSMUSP00000088591"/>
<dbReference type="iPTMnet" id="Q80X95"/>
<dbReference type="PhosphoSitePlus" id="Q80X95"/>
<dbReference type="SwissPalm" id="Q80X95"/>
<dbReference type="jPOST" id="Q80X95"/>
<dbReference type="PaxDb" id="10090-ENSMUSP00000088591"/>
<dbReference type="PeptideAtlas" id="Q80X95"/>
<dbReference type="ProteomicsDB" id="299881"/>
<dbReference type="Pumba" id="Q80X95"/>
<dbReference type="Antibodypedia" id="42790">
    <property type="antibodies" value="165 antibodies from 25 providers"/>
</dbReference>
<dbReference type="DNASU" id="68441"/>
<dbReference type="Ensembl" id="ENSMUST00000091064.8">
    <property type="protein sequence ID" value="ENSMUSP00000088591.7"/>
    <property type="gene ID" value="ENSMUSG00000070934.7"/>
</dbReference>
<dbReference type="GeneID" id="68441"/>
<dbReference type="KEGG" id="mmu:68441"/>
<dbReference type="UCSC" id="uc008tlw.2">
    <property type="organism name" value="mouse"/>
</dbReference>
<dbReference type="AGR" id="MGI:1915691"/>
<dbReference type="CTD" id="10670"/>
<dbReference type="MGI" id="MGI:1915691">
    <property type="gene designation" value="Rraga"/>
</dbReference>
<dbReference type="VEuPathDB" id="HostDB:ENSMUSG00000070934"/>
<dbReference type="eggNOG" id="KOG3886">
    <property type="taxonomic scope" value="Eukaryota"/>
</dbReference>
<dbReference type="GeneTree" id="ENSGT00950000183031"/>
<dbReference type="HOGENOM" id="CLU_044099_1_0_1"/>
<dbReference type="InParanoid" id="Q80X95"/>
<dbReference type="OMA" id="QQKDHIF"/>
<dbReference type="OrthoDB" id="10020193at2759"/>
<dbReference type="PhylomeDB" id="Q80X95"/>
<dbReference type="TreeFam" id="TF300616"/>
<dbReference type="Reactome" id="R-MMU-1632852">
    <property type="pathway name" value="Macroautophagy"/>
</dbReference>
<dbReference type="Reactome" id="R-MMU-165159">
    <property type="pathway name" value="MTOR signalling"/>
</dbReference>
<dbReference type="Reactome" id="R-MMU-166208">
    <property type="pathway name" value="mTORC1-mediated signalling"/>
</dbReference>
<dbReference type="Reactome" id="R-MMU-380972">
    <property type="pathway name" value="Energy dependent regulation of mTOR by LKB1-AMPK"/>
</dbReference>
<dbReference type="Reactome" id="R-MMU-5628897">
    <property type="pathway name" value="TP53 Regulates Metabolic Genes"/>
</dbReference>
<dbReference type="Reactome" id="R-MMU-8866654">
    <property type="pathway name" value="E3 ubiquitin ligases ubiquitinate target proteins"/>
</dbReference>
<dbReference type="Reactome" id="R-MMU-8943724">
    <property type="pathway name" value="Regulation of PTEN gene transcription"/>
</dbReference>
<dbReference type="Reactome" id="R-MMU-9639288">
    <property type="pathway name" value="Amino acids regulate mTORC1"/>
</dbReference>
<dbReference type="BioGRID-ORCS" id="68441">
    <property type="hits" value="20 hits in 80 CRISPR screens"/>
</dbReference>
<dbReference type="ChiTaRS" id="Rraga">
    <property type="organism name" value="mouse"/>
</dbReference>
<dbReference type="PRO" id="PR:Q80X95"/>
<dbReference type="Proteomes" id="UP000000589">
    <property type="component" value="Chromosome 4"/>
</dbReference>
<dbReference type="RNAct" id="Q80X95">
    <property type="molecule type" value="protein"/>
</dbReference>
<dbReference type="Bgee" id="ENSMUSG00000070934">
    <property type="expression patterns" value="Expressed in animal zygote and 252 other cell types or tissues"/>
</dbReference>
<dbReference type="GO" id="GO:0005737">
    <property type="term" value="C:cytoplasm"/>
    <property type="evidence" value="ECO:0000250"/>
    <property type="project" value="UniProtKB"/>
</dbReference>
<dbReference type="GO" id="GO:1990877">
    <property type="term" value="C:FNIP-folliculin RagC/D GAP"/>
    <property type="evidence" value="ECO:0007669"/>
    <property type="project" value="Ensembl"/>
</dbReference>
<dbReference type="GO" id="GO:1990130">
    <property type="term" value="C:GATOR1 complex"/>
    <property type="evidence" value="ECO:0007669"/>
    <property type="project" value="Ensembl"/>
</dbReference>
<dbReference type="GO" id="GO:0005765">
    <property type="term" value="C:lysosomal membrane"/>
    <property type="evidence" value="ECO:0000250"/>
    <property type="project" value="UniProtKB"/>
</dbReference>
<dbReference type="GO" id="GO:0005764">
    <property type="term" value="C:lysosome"/>
    <property type="evidence" value="ECO:0000250"/>
    <property type="project" value="UniProtKB"/>
</dbReference>
<dbReference type="GO" id="GO:0005654">
    <property type="term" value="C:nucleoplasm"/>
    <property type="evidence" value="ECO:0007669"/>
    <property type="project" value="Ensembl"/>
</dbReference>
<dbReference type="GO" id="GO:0005634">
    <property type="term" value="C:nucleus"/>
    <property type="evidence" value="ECO:0000250"/>
    <property type="project" value="UniProtKB"/>
</dbReference>
<dbReference type="GO" id="GO:0005525">
    <property type="term" value="F:GTP binding"/>
    <property type="evidence" value="ECO:0000315"/>
    <property type="project" value="UniProtKB"/>
</dbReference>
<dbReference type="GO" id="GO:0003924">
    <property type="term" value="F:GTPase activity"/>
    <property type="evidence" value="ECO:0000315"/>
    <property type="project" value="UniProtKB"/>
</dbReference>
<dbReference type="GO" id="GO:0051219">
    <property type="term" value="F:phosphoprotein binding"/>
    <property type="evidence" value="ECO:0000250"/>
    <property type="project" value="UniProtKB"/>
</dbReference>
<dbReference type="GO" id="GO:0046982">
    <property type="term" value="F:protein heterodimerization activity"/>
    <property type="evidence" value="ECO:0000250"/>
    <property type="project" value="UniProtKB"/>
</dbReference>
<dbReference type="GO" id="GO:0042803">
    <property type="term" value="F:protein homodimerization activity"/>
    <property type="evidence" value="ECO:0000250"/>
    <property type="project" value="UniProtKB"/>
</dbReference>
<dbReference type="GO" id="GO:0043495">
    <property type="term" value="F:protein-membrane adaptor activity"/>
    <property type="evidence" value="ECO:0000250"/>
    <property type="project" value="UniProtKB"/>
</dbReference>
<dbReference type="GO" id="GO:0031625">
    <property type="term" value="F:ubiquitin protein ligase binding"/>
    <property type="evidence" value="ECO:0007669"/>
    <property type="project" value="Ensembl"/>
</dbReference>
<dbReference type="GO" id="GO:0006915">
    <property type="term" value="P:apoptotic process"/>
    <property type="evidence" value="ECO:0007669"/>
    <property type="project" value="UniProtKB-KW"/>
</dbReference>
<dbReference type="GO" id="GO:0034198">
    <property type="term" value="P:cellular response to amino acid starvation"/>
    <property type="evidence" value="ECO:0000250"/>
    <property type="project" value="UniProtKB"/>
</dbReference>
<dbReference type="GO" id="GO:0071230">
    <property type="term" value="P:cellular response to amino acid stimulus"/>
    <property type="evidence" value="ECO:0000250"/>
    <property type="project" value="UniProtKB"/>
</dbReference>
<dbReference type="GO" id="GO:0009267">
    <property type="term" value="P:cellular response to starvation"/>
    <property type="evidence" value="ECO:0000315"/>
    <property type="project" value="UniProtKB"/>
</dbReference>
<dbReference type="GO" id="GO:0042593">
    <property type="term" value="P:glucose homeostasis"/>
    <property type="evidence" value="ECO:0000315"/>
    <property type="project" value="UniProtKB"/>
</dbReference>
<dbReference type="GO" id="GO:0035556">
    <property type="term" value="P:intracellular signal transduction"/>
    <property type="evidence" value="ECO:0007669"/>
    <property type="project" value="Ensembl"/>
</dbReference>
<dbReference type="GO" id="GO:0010507">
    <property type="term" value="P:negative regulation of autophagy"/>
    <property type="evidence" value="ECO:0000315"/>
    <property type="project" value="UniProtKB"/>
</dbReference>
<dbReference type="GO" id="GO:0032008">
    <property type="term" value="P:positive regulation of TOR signaling"/>
    <property type="evidence" value="ECO:0000315"/>
    <property type="project" value="UniProtKB"/>
</dbReference>
<dbReference type="GO" id="GO:1904263">
    <property type="term" value="P:positive regulation of TORC1 signaling"/>
    <property type="evidence" value="ECO:0000250"/>
    <property type="project" value="UniProtKB"/>
</dbReference>
<dbReference type="GO" id="GO:0008104">
    <property type="term" value="P:protein localization"/>
    <property type="evidence" value="ECO:0000250"/>
    <property type="project" value="UniProtKB"/>
</dbReference>
<dbReference type="GO" id="GO:0061462">
    <property type="term" value="P:protein localization to lysosome"/>
    <property type="evidence" value="ECO:0007669"/>
    <property type="project" value="Ensembl"/>
</dbReference>
<dbReference type="GO" id="GO:0072657">
    <property type="term" value="P:protein localization to membrane"/>
    <property type="evidence" value="ECO:0000250"/>
    <property type="project" value="UniProtKB"/>
</dbReference>
<dbReference type="GO" id="GO:0042268">
    <property type="term" value="P:regulation of cytolysis"/>
    <property type="evidence" value="ECO:0000266"/>
    <property type="project" value="MGI"/>
</dbReference>
<dbReference type="GO" id="GO:1903432">
    <property type="term" value="P:regulation of TORC1 signaling"/>
    <property type="evidence" value="ECO:0000250"/>
    <property type="project" value="UniProtKB"/>
</dbReference>
<dbReference type="GO" id="GO:0043200">
    <property type="term" value="P:response to amino acid"/>
    <property type="evidence" value="ECO:0000250"/>
    <property type="project" value="UniProtKB"/>
</dbReference>
<dbReference type="GO" id="GO:0033209">
    <property type="term" value="P:tumor necrosis factor-mediated signaling pathway"/>
    <property type="evidence" value="ECO:0007669"/>
    <property type="project" value="Ensembl"/>
</dbReference>
<dbReference type="CDD" id="cd11384">
    <property type="entry name" value="RagA_like"/>
    <property type="match status" value="1"/>
</dbReference>
<dbReference type="FunFam" id="3.30.450.190:FF:000002">
    <property type="entry name" value="Ras-related GTP-binding protein A"/>
    <property type="match status" value="1"/>
</dbReference>
<dbReference type="FunFam" id="3.40.50.300:FF:000276">
    <property type="entry name" value="Ras-related GTP-binding protein A"/>
    <property type="match status" value="1"/>
</dbReference>
<dbReference type="Gene3D" id="3.30.450.190">
    <property type="match status" value="1"/>
</dbReference>
<dbReference type="Gene3D" id="3.40.50.300">
    <property type="entry name" value="P-loop containing nucleotide triphosphate hydrolases"/>
    <property type="match status" value="1"/>
</dbReference>
<dbReference type="InterPro" id="IPR006762">
    <property type="entry name" value="Gtr1_RagA"/>
</dbReference>
<dbReference type="InterPro" id="IPR027417">
    <property type="entry name" value="P-loop_NTPase"/>
</dbReference>
<dbReference type="InterPro" id="IPR039397">
    <property type="entry name" value="RagA/B"/>
</dbReference>
<dbReference type="PANTHER" id="PTHR11259">
    <property type="entry name" value="RAS-RELATED GTP BINDING RAG/GTR YEAST"/>
    <property type="match status" value="1"/>
</dbReference>
<dbReference type="PANTHER" id="PTHR11259:SF7">
    <property type="entry name" value="RAS-RELATED GTP-BINDING PROTEIN A"/>
    <property type="match status" value="1"/>
</dbReference>
<dbReference type="Pfam" id="PF04670">
    <property type="entry name" value="Gtr1_RagA"/>
    <property type="match status" value="1"/>
</dbReference>
<dbReference type="SUPFAM" id="SSF52540">
    <property type="entry name" value="P-loop containing nucleoside triphosphate hydrolases"/>
    <property type="match status" value="1"/>
</dbReference>
<organism>
    <name type="scientific">Mus musculus</name>
    <name type="common">Mouse</name>
    <dbReference type="NCBI Taxonomy" id="10090"/>
    <lineage>
        <taxon>Eukaryota</taxon>
        <taxon>Metazoa</taxon>
        <taxon>Chordata</taxon>
        <taxon>Craniata</taxon>
        <taxon>Vertebrata</taxon>
        <taxon>Euteleostomi</taxon>
        <taxon>Mammalia</taxon>
        <taxon>Eutheria</taxon>
        <taxon>Euarchontoglires</taxon>
        <taxon>Glires</taxon>
        <taxon>Rodentia</taxon>
        <taxon>Myomorpha</taxon>
        <taxon>Muroidea</taxon>
        <taxon>Muridae</taxon>
        <taxon>Murinae</taxon>
        <taxon>Mus</taxon>
        <taxon>Mus</taxon>
    </lineage>
</organism>
<feature type="chain" id="PRO_0000239946" description="Ras-related GTP-binding protein A">
    <location>
        <begin position="1"/>
        <end position="313"/>
    </location>
</feature>
<feature type="binding site" evidence="1">
    <location>
        <position position="16"/>
    </location>
    <ligand>
        <name>GTP</name>
        <dbReference type="ChEBI" id="CHEBI:37565"/>
    </ligand>
</feature>
<feature type="binding site" evidence="1">
    <location>
        <position position="17"/>
    </location>
    <ligand>
        <name>GDP</name>
        <dbReference type="ChEBI" id="CHEBI:58189"/>
    </ligand>
</feature>
<feature type="binding site" evidence="1">
    <location>
        <position position="17"/>
    </location>
    <ligand>
        <name>GTP</name>
        <dbReference type="ChEBI" id="CHEBI:37565"/>
    </ligand>
</feature>
<feature type="binding site" evidence="1">
    <location>
        <position position="19"/>
    </location>
    <ligand>
        <name>GDP</name>
        <dbReference type="ChEBI" id="CHEBI:58189"/>
    </ligand>
</feature>
<feature type="binding site" evidence="1">
    <location>
        <position position="19"/>
    </location>
    <ligand>
        <name>GTP</name>
        <dbReference type="ChEBI" id="CHEBI:37565"/>
    </ligand>
</feature>
<feature type="binding site" evidence="1">
    <location>
        <position position="20"/>
    </location>
    <ligand>
        <name>GDP</name>
        <dbReference type="ChEBI" id="CHEBI:58189"/>
    </ligand>
</feature>
<feature type="binding site" evidence="1">
    <location>
        <position position="20"/>
    </location>
    <ligand>
        <name>GTP</name>
        <dbReference type="ChEBI" id="CHEBI:37565"/>
    </ligand>
</feature>
<feature type="binding site" evidence="1">
    <location>
        <position position="21"/>
    </location>
    <ligand>
        <name>GDP</name>
        <dbReference type="ChEBI" id="CHEBI:58189"/>
    </ligand>
</feature>
<feature type="binding site" evidence="1">
    <location>
        <position position="21"/>
    </location>
    <ligand>
        <name>GTP</name>
        <dbReference type="ChEBI" id="CHEBI:37565"/>
    </ligand>
</feature>
<feature type="binding site" evidence="1">
    <location>
        <position position="22"/>
    </location>
    <ligand>
        <name>GDP</name>
        <dbReference type="ChEBI" id="CHEBI:58189"/>
    </ligand>
</feature>
<feature type="binding site" evidence="1">
    <location>
        <position position="22"/>
    </location>
    <ligand>
        <name>GTP</name>
        <dbReference type="ChEBI" id="CHEBI:37565"/>
    </ligand>
</feature>
<feature type="binding site" evidence="1">
    <location>
        <position position="36"/>
    </location>
    <ligand>
        <name>GTP</name>
        <dbReference type="ChEBI" id="CHEBI:37565"/>
    </ligand>
</feature>
<feature type="binding site" evidence="1">
    <location>
        <position position="42"/>
    </location>
    <ligand>
        <name>GTP</name>
        <dbReference type="ChEBI" id="CHEBI:37565"/>
    </ligand>
</feature>
<feature type="binding site" evidence="1">
    <location>
        <position position="65"/>
    </location>
    <ligand>
        <name>GTP</name>
        <dbReference type="ChEBI" id="CHEBI:37565"/>
    </ligand>
</feature>
<feature type="binding site" evidence="1">
    <location>
        <position position="127"/>
    </location>
    <ligand>
        <name>GDP</name>
        <dbReference type="ChEBI" id="CHEBI:58189"/>
    </ligand>
</feature>
<feature type="binding site" evidence="1">
    <location>
        <position position="127"/>
    </location>
    <ligand>
        <name>GTP</name>
        <dbReference type="ChEBI" id="CHEBI:37565"/>
    </ligand>
</feature>
<feature type="binding site" evidence="1">
    <location>
        <position position="130"/>
    </location>
    <ligand>
        <name>GDP</name>
        <dbReference type="ChEBI" id="CHEBI:58189"/>
    </ligand>
</feature>
<feature type="binding site" evidence="1">
    <location>
        <position position="148"/>
    </location>
    <ligand>
        <name>GDP</name>
        <dbReference type="ChEBI" id="CHEBI:58189"/>
    </ligand>
</feature>
<feature type="binding site" evidence="1">
    <location>
        <position position="164"/>
    </location>
    <ligand>
        <name>GDP</name>
        <dbReference type="ChEBI" id="CHEBI:58189"/>
    </ligand>
</feature>
<feature type="binding site" evidence="1">
    <location>
        <position position="164"/>
    </location>
    <ligand>
        <name>GTP</name>
        <dbReference type="ChEBI" id="CHEBI:37565"/>
    </ligand>
</feature>
<feature type="modified residue" description="Phosphoserine" evidence="1">
    <location>
        <position position="309"/>
    </location>
</feature>
<feature type="cross-link" description="Glycyl lysine isopeptide (Lys-Gly) (interchain with G-Cter in ubiquitin)" evidence="1">
    <location>
        <position position="142"/>
    </location>
</feature>
<feature type="cross-link" description="Glycyl lysine isopeptide (Lys-Gly) (interchain with G-Cter in ubiquitin)" evidence="1">
    <location>
        <position position="220"/>
    </location>
</feature>
<feature type="cross-link" description="Glycyl lysine isopeptide (Lys-Gly) (interchain with G-Cter in ubiquitin)" evidence="1">
    <location>
        <position position="230"/>
    </location>
</feature>
<feature type="cross-link" description="Glycyl lysine isopeptide (Lys-Gly) (interchain with G-Cter in ubiquitin)" evidence="1">
    <location>
        <position position="244"/>
    </location>
</feature>
<feature type="mutagenesis site" description="Maintains GTP-bound state, leading to activate mTORC1. Knockin mice develop normally, but die within 1 day postpartum because of constitutive activation of mTORC1 that prevents response to fasting. Inhibition of mTORC1 is required for neonatal autophagy and thus nutrient homeostasis." evidence="2">
    <original>Q</original>
    <variation>L</variation>
    <location>
        <position position="66"/>
    </location>
</feature>
<evidence type="ECO:0000250" key="1">
    <source>
        <dbReference type="UniProtKB" id="Q7L523"/>
    </source>
</evidence>
<evidence type="ECO:0000269" key="2">
    <source>
    </source>
</evidence>
<evidence type="ECO:0000269" key="3">
    <source>
    </source>
</evidence>
<evidence type="ECO:0000305" key="4"/>
<evidence type="ECO:0000312" key="5">
    <source>
        <dbReference type="EMBL" id="AAH37615.1"/>
    </source>
</evidence>
<evidence type="ECO:0000312" key="6">
    <source>
        <dbReference type="EMBL" id="AAH48245.1"/>
    </source>
</evidence>
<evidence type="ECO:0000312" key="7">
    <source>
        <dbReference type="EMBL" id="BAC25103.1"/>
    </source>
</evidence>
<evidence type="ECO:0000312" key="8">
    <source>
        <dbReference type="EMBL" id="BAE25953.1"/>
    </source>
</evidence>
<evidence type="ECO:0000312" key="9">
    <source>
        <dbReference type="MGI" id="MGI:1915691"/>
    </source>
</evidence>
<protein>
    <recommendedName>
        <fullName evidence="4">Ras-related GTP-binding protein A</fullName>
        <shortName evidence="1">Rag A</shortName>
        <shortName evidence="1">RagA</shortName>
        <ecNumber evidence="1">3.6.5.-</ecNumber>
    </recommendedName>
</protein>
<sequence length="313" mass="36566">MPNTAMKKKVLLMGKSGSGKTSMRSIIFANYIARDTRRLGATIDVEHSHVRFLGNLVLNLWDCGGQDTFMENYFTSQRDNIFRNVEVLIYVFDVESRELEKDMHYYQSCLEAILQNSPDAKIFCLVHKMDLVQEDQRDLIFKEREEDLRRLSRPLECACFRTSIWDETLYKAWSSIVYQLIPNVQQLEMNLRNFAQIIEADEVLLFERATFLVISHYQCKEQRDVHRFEKISNIIKQFKLSCSKLAASFQSMEVRNSNFAAFIDIFTSNTYVMVVMSDPSIPSAATLINIRNARKHFEKLERVDGPKHSLLMR</sequence>
<name>RRAGA_MOUSE</name>
<proteinExistence type="evidence at protein level"/>
<comment type="function">
    <text evidence="1 2">Guanine nucleotide-binding protein that plays a crucial role in the cellular response to amino acid availability through regulation of the mTORC1 signaling cascade (PubMed:23263183). Forms heterodimeric Rag complexes with RagC/RRAGC or RagD/RRAGD and cycles between an inactive GDP-bound and an active GTP-bound form: RagA/RRAGA is in its active form when GTP-bound RagA/RRAGA forms a complex with GDP-bound RagC/RRAGC (or RagD/RRAGD) and in an inactive form when GDP-bound RagA/RRAGA heterodimerizes with GTP-bound RagC/RRAGC (or RagD/RRAGD) (PubMed:23263183). In its GTP-bound active form, promotes the recruitment of mTORC1 to the lysosomes and its subsequent activation by the GTPase RHEB (PubMed:23263183). Involved in the RCC1/Ran-GTPase pathway (By similarity). May play a direct role in a TNF-alpha signaling pathway leading to induction of cell death (By similarity).</text>
</comment>
<comment type="catalytic activity">
    <reaction evidence="1">
        <text>GTP + H2O = GDP + phosphate + H(+)</text>
        <dbReference type="Rhea" id="RHEA:19669"/>
        <dbReference type="ChEBI" id="CHEBI:15377"/>
        <dbReference type="ChEBI" id="CHEBI:15378"/>
        <dbReference type="ChEBI" id="CHEBI:37565"/>
        <dbReference type="ChEBI" id="CHEBI:43474"/>
        <dbReference type="ChEBI" id="CHEBI:58189"/>
    </reaction>
    <physiologicalReaction direction="left-to-right" evidence="1">
        <dbReference type="Rhea" id="RHEA:19670"/>
    </physiologicalReaction>
</comment>
<comment type="activity regulation">
    <text evidence="1">The activation of GTP-binding proteins is generally mediated by a guanine exchange factor (GEF), while inactivation through hydrolysis of bound GTP is catalyzed by a GTPase activating protein (GAP) (By similarity). The Ragulator complex functions as a GEF and promotes the active GTP-bound form (By similarity). The GATOR1 complex functions as a GAP and stimulates RRAGA GTPase activity to turn it into its inactive GDP-bound form, preventing mTORC1 recruitment and activation (By similarity).</text>
</comment>
<comment type="subunit">
    <text evidence="1 3">Can occur as a homodimer or as a heterodimer with RRAGC or RRAGD in a sequence-independent manner; heterodimerization stabilizes proteins of the heterodimer (By similarity). The GTP-bound form of RRAGA (in complex with the GDP-bound form of RRAGC or RRAGD) interacts with RPTOR, thereby promoting recruitment of mTORC1 to the lysosomes (By similarity). The Rag heterodimer interacts with SLC38A9; the probable amino acid sensor (By similarity). The Rag heterodimer interacts with the Ragulator complex (By similarity). The GTP-bound form of RRAGA interacts with NOL8 (By similarity). Component of the lysosomal folliculin complex (LFC), composed of FLCN, FNIP1 (or FNIP2), RagA/RRAGA or RagB/RRAGB GDP-bound, RagC/RRAGC or RagD/RRAGD GTP-bound, and Ragulator (By similarity). Interacts with SH3BP4; the interaction with this negative regulator is most probably direct, preferentially occurs with the inactive GDP-bound form of RRAGA and is negatively regulated by amino acids (By similarity). Interacts (polyubiquitinated) with TSC2 (By similarity). Interacts with SESN1, SESN2 and SESN3 (By similarity). Interacts with PIP4P1 (PubMed:29644770). Interacts with GPR137B (By similarity). Interacts with WDR83; this interaction regulates the spatiotemporal localization of mTORC1 to the lysosomal surface (By similarity).</text>
</comment>
<comment type="subcellular location">
    <subcellularLocation>
        <location evidence="1">Cytoplasm</location>
    </subcellularLocation>
    <subcellularLocation>
        <location evidence="1">Nucleus</location>
    </subcellularLocation>
    <subcellularLocation>
        <location evidence="1">Lysosome membrane</location>
    </subcellularLocation>
    <text evidence="1">Predominantly cytoplasmic. Recruited to the lysosome surface by the Ragulator complex. May shuttle between the cytoplasm and nucleus, depending on the bound nucleotide state.</text>
</comment>
<comment type="PTM">
    <text evidence="1">Polybiquitinated via 'Lys-63'-linked polyubiquitination by RNF152 in response to amino acid starvation: polyubiquitination of the GDP-bound inactive form by RNF152 promotes RRAGA inactivation and interaction with the GATOR1 complex. This does not affect RRAGA degradation.</text>
</comment>
<comment type="similarity">
    <text evidence="4">Belongs to the GTR/RAG GTP-binding protein family.</text>
</comment>
<comment type="sequence caution" evidence="4">
    <conflict type="erroneous initiation">
        <sequence resource="EMBL-CDS" id="AAH37615"/>
    </conflict>
</comment>
<comment type="sequence caution" evidence="4">
    <conflict type="frameshift">
        <sequence resource="EMBL-CDS" id="BAC25103"/>
    </conflict>
</comment>